<proteinExistence type="inferred from homology"/>
<organism>
    <name type="scientific">Caenorhabditis briggsae</name>
    <dbReference type="NCBI Taxonomy" id="6238"/>
    <lineage>
        <taxon>Eukaryota</taxon>
        <taxon>Metazoa</taxon>
        <taxon>Ecdysozoa</taxon>
        <taxon>Nematoda</taxon>
        <taxon>Chromadorea</taxon>
        <taxon>Rhabditida</taxon>
        <taxon>Rhabditina</taxon>
        <taxon>Rhabditomorpha</taxon>
        <taxon>Rhabditoidea</taxon>
        <taxon>Rhabditidae</taxon>
        <taxon>Peloderinae</taxon>
        <taxon>Caenorhabditis</taxon>
    </lineage>
</organism>
<keyword id="KW-0325">Glycoprotein</keyword>
<keyword id="KW-1185">Reference proteome</keyword>
<keyword id="KW-0964">Secreted</keyword>
<keyword id="KW-0732">Signal</keyword>
<feature type="signal peptide" evidence="1">
    <location>
        <begin position="1"/>
        <end position="20"/>
    </location>
</feature>
<feature type="chain" id="PRO_0000248564" description="DOMON domain-containing protein CBG21755">
    <location>
        <begin position="21"/>
        <end position="184"/>
    </location>
</feature>
<feature type="domain" description="DOMON" evidence="2">
    <location>
        <begin position="28"/>
        <end position="145"/>
    </location>
</feature>
<feature type="glycosylation site" description="N-linked (GlcNAc...) asparagine" evidence="1">
    <location>
        <position position="49"/>
    </location>
</feature>
<reference key="1">
    <citation type="journal article" date="2003" name="PLoS Biol.">
        <title>The genome sequence of Caenorhabditis briggsae: a platform for comparative genomics.</title>
        <authorList>
            <person name="Stein L.D."/>
            <person name="Bao Z."/>
            <person name="Blasiar D."/>
            <person name="Blumenthal T."/>
            <person name="Brent M.R."/>
            <person name="Chen N."/>
            <person name="Chinwalla A."/>
            <person name="Clarke L."/>
            <person name="Clee C."/>
            <person name="Coghlan A."/>
            <person name="Coulson A."/>
            <person name="D'Eustachio P."/>
            <person name="Fitch D.H.A."/>
            <person name="Fulton L.A."/>
            <person name="Fulton R.E."/>
            <person name="Griffiths-Jones S."/>
            <person name="Harris T.W."/>
            <person name="Hillier L.W."/>
            <person name="Kamath R."/>
            <person name="Kuwabara P.E."/>
            <person name="Mardis E.R."/>
            <person name="Marra M.A."/>
            <person name="Miner T.L."/>
            <person name="Minx P."/>
            <person name="Mullikin J.C."/>
            <person name="Plumb R.W."/>
            <person name="Rogers J."/>
            <person name="Schein J.E."/>
            <person name="Sohrmann M."/>
            <person name="Spieth J."/>
            <person name="Stajich J.E."/>
            <person name="Wei C."/>
            <person name="Willey D."/>
            <person name="Wilson R.K."/>
            <person name="Durbin R.M."/>
            <person name="Waterston R.H."/>
        </authorList>
    </citation>
    <scope>NUCLEOTIDE SEQUENCE [LARGE SCALE GENOMIC DNA]</scope>
    <source>
        <strain>AF16</strain>
    </source>
</reference>
<gene>
    <name type="ORF">CBG21755</name>
</gene>
<protein>
    <recommendedName>
        <fullName>DOMON domain-containing protein CBG21755</fullName>
    </recommendedName>
</protein>
<sequence length="184" mass="20602">MIVPISLLFLFLSFVPFSYSATCDFENEVASMSWMVKGDVLQINFEHKNLTENRWASIAFGNGPGMTNLESIIFSRDDNNVITTNTGFTPKKKKVVVDDVSYVTVRNVQLKGDLLRITVTRPLGPAGPRDFSLDQCVNWIVVPGGALSNGKFKKHHGQIYFVKDVCAAKCTAQRMMRVLSNRIH</sequence>
<comment type="subcellular location">
    <subcellularLocation>
        <location evidence="3">Secreted</location>
    </subcellularLocation>
</comment>
<evidence type="ECO:0000255" key="1"/>
<evidence type="ECO:0000255" key="2">
    <source>
        <dbReference type="PROSITE-ProRule" id="PRU00246"/>
    </source>
</evidence>
<evidence type="ECO:0000305" key="3"/>
<accession>Q60QM6</accession>
<accession>A8Y0K3</accession>
<dbReference type="EMBL" id="HE600966">
    <property type="protein sequence ID" value="CAP38421.1"/>
    <property type="molecule type" value="Genomic_DNA"/>
</dbReference>
<dbReference type="RefSeq" id="XP_002632989.1">
    <property type="nucleotide sequence ID" value="XM_002632943.1"/>
</dbReference>
<dbReference type="SMR" id="Q60QM6"/>
<dbReference type="FunCoup" id="Q60QM6">
    <property type="interactions" value="1366"/>
</dbReference>
<dbReference type="STRING" id="6238.Q60QM6"/>
<dbReference type="EnsemblMetazoa" id="CBG21755.1">
    <property type="protein sequence ID" value="CBG21755.1"/>
    <property type="gene ID" value="WBGene00040449"/>
</dbReference>
<dbReference type="GeneID" id="8574986"/>
<dbReference type="KEGG" id="cbr:CBG_21755"/>
<dbReference type="CTD" id="8574986"/>
<dbReference type="WormBase" id="CBG21755">
    <property type="protein sequence ID" value="CBP11909"/>
    <property type="gene ID" value="WBGene00040449"/>
</dbReference>
<dbReference type="eggNOG" id="ENOG502THF3">
    <property type="taxonomic scope" value="Eukaryota"/>
</dbReference>
<dbReference type="HOGENOM" id="CLU_1416359_0_0_1"/>
<dbReference type="InParanoid" id="Q60QM6"/>
<dbReference type="OMA" id="VCAAQCT"/>
<dbReference type="Proteomes" id="UP000008549">
    <property type="component" value="Unassembled WGS sequence"/>
</dbReference>
<dbReference type="GO" id="GO:0005576">
    <property type="term" value="C:extracellular region"/>
    <property type="evidence" value="ECO:0007669"/>
    <property type="project" value="UniProtKB-SubCell"/>
</dbReference>
<dbReference type="InterPro" id="IPR005018">
    <property type="entry name" value="DOMON_domain"/>
</dbReference>
<dbReference type="PANTHER" id="PTHR36516:SF4">
    <property type="entry name" value="DOMON DOMAIN-CONTAINING PROTEIN Y73F4A.1"/>
    <property type="match status" value="1"/>
</dbReference>
<dbReference type="PANTHER" id="PTHR36516">
    <property type="entry name" value="PROTEIN CBG04168-RELATED"/>
    <property type="match status" value="1"/>
</dbReference>
<dbReference type="Pfam" id="PF03351">
    <property type="entry name" value="DOMON"/>
    <property type="match status" value="1"/>
</dbReference>
<dbReference type="SMART" id="SM00664">
    <property type="entry name" value="DoH"/>
    <property type="match status" value="1"/>
</dbReference>
<dbReference type="PROSITE" id="PS50836">
    <property type="entry name" value="DOMON"/>
    <property type="match status" value="1"/>
</dbReference>
<name>DMON2_CAEBR</name>